<keyword id="KW-0012">Acyltransferase</keyword>
<keyword id="KW-0028">Amino-acid biosynthesis</keyword>
<keyword id="KW-0963">Cytoplasm</keyword>
<keyword id="KW-0220">Diaminopimelate biosynthesis</keyword>
<keyword id="KW-0457">Lysine biosynthesis</keyword>
<keyword id="KW-0677">Repeat</keyword>
<keyword id="KW-0808">Transferase</keyword>
<accession>B4TK41</accession>
<protein>
    <recommendedName>
        <fullName evidence="1">2,3,4,5-tetrahydropyridine-2,6-dicarboxylate N-succinyltransferase</fullName>
        <ecNumber evidence="1">2.3.1.117</ecNumber>
    </recommendedName>
    <alternativeName>
        <fullName evidence="1">Tetrahydrodipicolinate N-succinyltransferase</fullName>
        <shortName evidence="1">THP succinyltransferase</shortName>
        <shortName evidence="1">Tetrahydropicolinate succinylase</shortName>
    </alternativeName>
</protein>
<evidence type="ECO:0000255" key="1">
    <source>
        <dbReference type="HAMAP-Rule" id="MF_00811"/>
    </source>
</evidence>
<reference key="1">
    <citation type="journal article" date="2011" name="J. Bacteriol.">
        <title>Comparative genomics of 28 Salmonella enterica isolates: evidence for CRISPR-mediated adaptive sublineage evolution.</title>
        <authorList>
            <person name="Fricke W.F."/>
            <person name="Mammel M.K."/>
            <person name="McDermott P.F."/>
            <person name="Tartera C."/>
            <person name="White D.G."/>
            <person name="Leclerc J.E."/>
            <person name="Ravel J."/>
            <person name="Cebula T.A."/>
        </authorList>
    </citation>
    <scope>NUCLEOTIDE SEQUENCE [LARGE SCALE GENOMIC DNA]</scope>
    <source>
        <strain>SL476</strain>
    </source>
</reference>
<name>DAPD_SALHS</name>
<comment type="catalytic activity">
    <reaction evidence="1">
        <text>(S)-2,3,4,5-tetrahydrodipicolinate + succinyl-CoA + H2O = (S)-2-succinylamino-6-oxoheptanedioate + CoA</text>
        <dbReference type="Rhea" id="RHEA:17325"/>
        <dbReference type="ChEBI" id="CHEBI:15377"/>
        <dbReference type="ChEBI" id="CHEBI:15685"/>
        <dbReference type="ChEBI" id="CHEBI:16845"/>
        <dbReference type="ChEBI" id="CHEBI:57287"/>
        <dbReference type="ChEBI" id="CHEBI:57292"/>
        <dbReference type="EC" id="2.3.1.117"/>
    </reaction>
</comment>
<comment type="pathway">
    <text evidence="1">Amino-acid biosynthesis; L-lysine biosynthesis via DAP pathway; LL-2,6-diaminopimelate from (S)-tetrahydrodipicolinate (succinylase route): step 1/3.</text>
</comment>
<comment type="subcellular location">
    <subcellularLocation>
        <location evidence="1">Cytoplasm</location>
    </subcellularLocation>
</comment>
<comment type="similarity">
    <text evidence="1">Belongs to the transferase hexapeptide repeat family.</text>
</comment>
<feature type="chain" id="PRO_1000134067" description="2,3,4,5-tetrahydropyridine-2,6-dicarboxylate N-succinyltransferase">
    <location>
        <begin position="1"/>
        <end position="274"/>
    </location>
</feature>
<gene>
    <name evidence="1" type="primary">dapD</name>
    <name type="ordered locus">SeHA_C0250</name>
</gene>
<dbReference type="EC" id="2.3.1.117" evidence="1"/>
<dbReference type="EMBL" id="CP001120">
    <property type="protein sequence ID" value="ACF68461.1"/>
    <property type="molecule type" value="Genomic_DNA"/>
</dbReference>
<dbReference type="RefSeq" id="WP_001186674.1">
    <property type="nucleotide sequence ID" value="NC_011083.1"/>
</dbReference>
<dbReference type="SMR" id="B4TK41"/>
<dbReference type="KEGG" id="seh:SeHA_C0250"/>
<dbReference type="HOGENOM" id="CLU_050859_0_1_6"/>
<dbReference type="UniPathway" id="UPA00034">
    <property type="reaction ID" value="UER00019"/>
</dbReference>
<dbReference type="Proteomes" id="UP000001866">
    <property type="component" value="Chromosome"/>
</dbReference>
<dbReference type="GO" id="GO:0005737">
    <property type="term" value="C:cytoplasm"/>
    <property type="evidence" value="ECO:0007669"/>
    <property type="project" value="UniProtKB-SubCell"/>
</dbReference>
<dbReference type="GO" id="GO:0008666">
    <property type="term" value="F:2,3,4,5-tetrahydropyridine-2,6-dicarboxylate N-succinyltransferase activity"/>
    <property type="evidence" value="ECO:0007669"/>
    <property type="project" value="UniProtKB-UniRule"/>
</dbReference>
<dbReference type="GO" id="GO:0016779">
    <property type="term" value="F:nucleotidyltransferase activity"/>
    <property type="evidence" value="ECO:0007669"/>
    <property type="project" value="TreeGrafter"/>
</dbReference>
<dbReference type="GO" id="GO:0019877">
    <property type="term" value="P:diaminopimelate biosynthetic process"/>
    <property type="evidence" value="ECO:0007669"/>
    <property type="project" value="UniProtKB-UniRule"/>
</dbReference>
<dbReference type="GO" id="GO:0009089">
    <property type="term" value="P:lysine biosynthetic process via diaminopimelate"/>
    <property type="evidence" value="ECO:0007669"/>
    <property type="project" value="UniProtKB-UniRule"/>
</dbReference>
<dbReference type="CDD" id="cd03350">
    <property type="entry name" value="LbH_THP_succinylT"/>
    <property type="match status" value="1"/>
</dbReference>
<dbReference type="FunFam" id="1.10.166.10:FF:000001">
    <property type="entry name" value="2,3,4,5-tetrahydropyridine-2,6-dicarboxylate N-succinyltransferase"/>
    <property type="match status" value="1"/>
</dbReference>
<dbReference type="FunFam" id="2.160.10.10:FF:000004">
    <property type="entry name" value="2,3,4,5-tetrahydropyridine-2,6-dicarboxylate N-succinyltransferase"/>
    <property type="match status" value="1"/>
</dbReference>
<dbReference type="Gene3D" id="2.160.10.10">
    <property type="entry name" value="Hexapeptide repeat proteins"/>
    <property type="match status" value="1"/>
</dbReference>
<dbReference type="Gene3D" id="1.10.166.10">
    <property type="entry name" value="Tetrahydrodipicolinate-N-succinyltransferase, N-terminal domain"/>
    <property type="match status" value="1"/>
</dbReference>
<dbReference type="HAMAP" id="MF_00811">
    <property type="entry name" value="DapD"/>
    <property type="match status" value="1"/>
</dbReference>
<dbReference type="InterPro" id="IPR005664">
    <property type="entry name" value="DapD_Trfase_Hexpep_rpt_fam"/>
</dbReference>
<dbReference type="InterPro" id="IPR001451">
    <property type="entry name" value="Hexapep"/>
</dbReference>
<dbReference type="InterPro" id="IPR018357">
    <property type="entry name" value="Hexapep_transf_CS"/>
</dbReference>
<dbReference type="InterPro" id="IPR023180">
    <property type="entry name" value="THP_succinylTrfase_dom1"/>
</dbReference>
<dbReference type="InterPro" id="IPR037133">
    <property type="entry name" value="THP_succinylTrfase_N_sf"/>
</dbReference>
<dbReference type="InterPro" id="IPR011004">
    <property type="entry name" value="Trimer_LpxA-like_sf"/>
</dbReference>
<dbReference type="NCBIfam" id="TIGR00965">
    <property type="entry name" value="dapD"/>
    <property type="match status" value="1"/>
</dbReference>
<dbReference type="NCBIfam" id="NF008808">
    <property type="entry name" value="PRK11830.1"/>
    <property type="match status" value="1"/>
</dbReference>
<dbReference type="PANTHER" id="PTHR19136:SF52">
    <property type="entry name" value="2,3,4,5-TETRAHYDROPYRIDINE-2,6-DICARBOXYLATE N-SUCCINYLTRANSFERASE"/>
    <property type="match status" value="1"/>
</dbReference>
<dbReference type="PANTHER" id="PTHR19136">
    <property type="entry name" value="MOLYBDENUM COFACTOR GUANYLYLTRANSFERASE"/>
    <property type="match status" value="1"/>
</dbReference>
<dbReference type="Pfam" id="PF14602">
    <property type="entry name" value="Hexapep_2"/>
    <property type="match status" value="1"/>
</dbReference>
<dbReference type="Pfam" id="PF14805">
    <property type="entry name" value="THDPS_N_2"/>
    <property type="match status" value="1"/>
</dbReference>
<dbReference type="SUPFAM" id="SSF51161">
    <property type="entry name" value="Trimeric LpxA-like enzymes"/>
    <property type="match status" value="1"/>
</dbReference>
<dbReference type="PROSITE" id="PS00101">
    <property type="entry name" value="HEXAPEP_TRANSFERASES"/>
    <property type="match status" value="1"/>
</dbReference>
<proteinExistence type="inferred from homology"/>
<organism>
    <name type="scientific">Salmonella heidelberg (strain SL476)</name>
    <dbReference type="NCBI Taxonomy" id="454169"/>
    <lineage>
        <taxon>Bacteria</taxon>
        <taxon>Pseudomonadati</taxon>
        <taxon>Pseudomonadota</taxon>
        <taxon>Gammaproteobacteria</taxon>
        <taxon>Enterobacterales</taxon>
        <taxon>Enterobacteriaceae</taxon>
        <taxon>Salmonella</taxon>
    </lineage>
</organism>
<sequence length="274" mass="29838">MQQLQNVIETAFERRADITPANVDTVTREAVNQVISLLDSGALRVAEKIDGQWVTHQWLKKAVLLSFRINDNQVIDGGESRYFDKVPMKFADYDEARFQKEGFRVVPPAAVRQGAFIARNTVLMPSYVNIGAYVDEGTMVDTWATVGSCAQIGKNVHLSGGVGIGGVLEPLQANPTIIEDNCFIGARSEVVEGVIVEEGSVISMGVYLGQSTKIYDRETGEVHYGRVPAGSVVVSGNLPSKDGKYSLYCAVIVKKVDAKTRGKVGINELLRTID</sequence>